<sequence length="731" mass="81660">MSHADQLARTHLAPDPADLSRLVAGTHHDPHGILGAHEYGDHTVIRAFRPHATEVAALVGGDRFAMQHIESGLFAVALPFTNLIDYRLQITYPDSEPYVVADAYRFLPTLGEVDLHLFGEGRHERLWEVLGAHPRSFTTADGVVTGVSFAVWAPNAKGISLIGEFNGWTGTEAPMRVLGSSGVWELFWPDFPIGGLYKFKVHGADGVVTERADPMAFATEVPPHTASRVTLSSYTWGDADWMTQRAARNPVFEPMSTYEVHLGSWRPGLSYRQLARELTDYVVEHGFTHVELLPVAEHPFAGSWGYQVTSYYAPTSRFGTPDEFRALVDALHQAGIGVIVDWVPAHFPKDAWALGRFDGTPLYEHSDPKRGEQLDWGTYVFDFGRREVRNFLVANALYWLQEFHIDGLRVDAVASMLYLDYSRPEGGWTPNIYGGRENLEAVQFLQEMNATAHKSAPGIVTIAEESTSWPGVTRPTNLGGLGFSMKWNMGWMHDTLDYISRDPIYRSYHHHEMTFSMLYAFSENYVLPLSHDEVVHGKGTLWGRMPGNNHVKAAGLRSLLAYQWAHPGKQLLFMGQEFGQRAEWSEERGLDWWQLDEQGFSNGILRLVRDINDIYRSHPALWSQDTVPDGYSWIDANDSANNVLSFLRYGKDGSVMACVFNFAGAEHSGYRLGLPSAGRWREVLNTDATVYNGSGIGNMGGVDATEDPWHGRPASAVLVLPPTSALWLEPK</sequence>
<name>GLGB_MYCPA</name>
<gene>
    <name evidence="1" type="primary">glgB</name>
    <name type="ordered locus">MAP_2434</name>
</gene>
<keyword id="KW-0119">Carbohydrate metabolism</keyword>
<keyword id="KW-0320">Glycogen biosynthesis</keyword>
<keyword id="KW-0321">Glycogen metabolism</keyword>
<keyword id="KW-0328">Glycosyltransferase</keyword>
<keyword id="KW-1185">Reference proteome</keyword>
<keyword id="KW-0808">Transferase</keyword>
<dbReference type="EC" id="2.4.1.18" evidence="1"/>
<dbReference type="EMBL" id="AE016958">
    <property type="protein sequence ID" value="AAS04751.1"/>
    <property type="molecule type" value="Genomic_DNA"/>
</dbReference>
<dbReference type="RefSeq" id="WP_003877366.1">
    <property type="nucleotide sequence ID" value="NZ_CP106873.1"/>
</dbReference>
<dbReference type="SMR" id="Q73X75"/>
<dbReference type="STRING" id="262316.MAP_2434"/>
<dbReference type="CAZy" id="CBM48">
    <property type="family name" value="Carbohydrate-Binding Module Family 48"/>
</dbReference>
<dbReference type="CAZy" id="GH13">
    <property type="family name" value="Glycoside Hydrolase Family 13"/>
</dbReference>
<dbReference type="KEGG" id="mpa:MAP_2434"/>
<dbReference type="PATRIC" id="fig|262316.17.peg.2585"/>
<dbReference type="eggNOG" id="COG0296">
    <property type="taxonomic scope" value="Bacteria"/>
</dbReference>
<dbReference type="HOGENOM" id="CLU_004245_3_2_11"/>
<dbReference type="UniPathway" id="UPA00164"/>
<dbReference type="Proteomes" id="UP000000580">
    <property type="component" value="Chromosome"/>
</dbReference>
<dbReference type="GO" id="GO:0005829">
    <property type="term" value="C:cytosol"/>
    <property type="evidence" value="ECO:0007669"/>
    <property type="project" value="TreeGrafter"/>
</dbReference>
<dbReference type="GO" id="GO:0003844">
    <property type="term" value="F:1,4-alpha-glucan branching enzyme activity"/>
    <property type="evidence" value="ECO:0007669"/>
    <property type="project" value="UniProtKB-UniRule"/>
</dbReference>
<dbReference type="GO" id="GO:0043169">
    <property type="term" value="F:cation binding"/>
    <property type="evidence" value="ECO:0007669"/>
    <property type="project" value="InterPro"/>
</dbReference>
<dbReference type="GO" id="GO:0004553">
    <property type="term" value="F:hydrolase activity, hydrolyzing O-glycosyl compounds"/>
    <property type="evidence" value="ECO:0007669"/>
    <property type="project" value="InterPro"/>
</dbReference>
<dbReference type="GO" id="GO:0005978">
    <property type="term" value="P:glycogen biosynthetic process"/>
    <property type="evidence" value="ECO:0007669"/>
    <property type="project" value="UniProtKB-UniRule"/>
</dbReference>
<dbReference type="CDD" id="cd11322">
    <property type="entry name" value="AmyAc_Glg_BE"/>
    <property type="match status" value="1"/>
</dbReference>
<dbReference type="CDD" id="cd02855">
    <property type="entry name" value="E_set_GBE_prok_N"/>
    <property type="match status" value="1"/>
</dbReference>
<dbReference type="FunFam" id="2.60.40.10:FF:000169">
    <property type="entry name" value="1,4-alpha-glucan branching enzyme GlgB"/>
    <property type="match status" value="1"/>
</dbReference>
<dbReference type="FunFam" id="2.60.40.10:FF:002204">
    <property type="entry name" value="1,4-alpha-glucan branching enzyme GlgB"/>
    <property type="match status" value="1"/>
</dbReference>
<dbReference type="FunFam" id="2.60.40.1180:FF:000002">
    <property type="entry name" value="1,4-alpha-glucan branching enzyme GlgB"/>
    <property type="match status" value="1"/>
</dbReference>
<dbReference type="FunFam" id="3.20.20.80:FF:000003">
    <property type="entry name" value="1,4-alpha-glucan branching enzyme GlgB"/>
    <property type="match status" value="1"/>
</dbReference>
<dbReference type="Gene3D" id="3.20.20.80">
    <property type="entry name" value="Glycosidases"/>
    <property type="match status" value="1"/>
</dbReference>
<dbReference type="Gene3D" id="2.60.40.1180">
    <property type="entry name" value="Golgi alpha-mannosidase II"/>
    <property type="match status" value="1"/>
</dbReference>
<dbReference type="Gene3D" id="2.60.40.10">
    <property type="entry name" value="Immunoglobulins"/>
    <property type="match status" value="2"/>
</dbReference>
<dbReference type="HAMAP" id="MF_00685">
    <property type="entry name" value="GlgB"/>
    <property type="match status" value="1"/>
</dbReference>
<dbReference type="InterPro" id="IPR006048">
    <property type="entry name" value="A-amylase/branching_C"/>
</dbReference>
<dbReference type="InterPro" id="IPR037439">
    <property type="entry name" value="Branching_enzy"/>
</dbReference>
<dbReference type="InterPro" id="IPR006407">
    <property type="entry name" value="GlgB"/>
</dbReference>
<dbReference type="InterPro" id="IPR054169">
    <property type="entry name" value="GlgB_N"/>
</dbReference>
<dbReference type="InterPro" id="IPR044143">
    <property type="entry name" value="GlgB_N_E_set_prok"/>
</dbReference>
<dbReference type="InterPro" id="IPR006047">
    <property type="entry name" value="Glyco_hydro_13_cat_dom"/>
</dbReference>
<dbReference type="InterPro" id="IPR004193">
    <property type="entry name" value="Glyco_hydro_13_N"/>
</dbReference>
<dbReference type="InterPro" id="IPR013780">
    <property type="entry name" value="Glyco_hydro_b"/>
</dbReference>
<dbReference type="InterPro" id="IPR017853">
    <property type="entry name" value="Glycoside_hydrolase_SF"/>
</dbReference>
<dbReference type="InterPro" id="IPR013783">
    <property type="entry name" value="Ig-like_fold"/>
</dbReference>
<dbReference type="InterPro" id="IPR014756">
    <property type="entry name" value="Ig_E-set"/>
</dbReference>
<dbReference type="NCBIfam" id="TIGR01515">
    <property type="entry name" value="branching_enzym"/>
    <property type="match status" value="1"/>
</dbReference>
<dbReference type="NCBIfam" id="NF003811">
    <property type="entry name" value="PRK05402.1"/>
    <property type="match status" value="1"/>
</dbReference>
<dbReference type="NCBIfam" id="NF008967">
    <property type="entry name" value="PRK12313.1"/>
    <property type="match status" value="1"/>
</dbReference>
<dbReference type="PANTHER" id="PTHR43651">
    <property type="entry name" value="1,4-ALPHA-GLUCAN-BRANCHING ENZYME"/>
    <property type="match status" value="1"/>
</dbReference>
<dbReference type="PANTHER" id="PTHR43651:SF3">
    <property type="entry name" value="1,4-ALPHA-GLUCAN-BRANCHING ENZYME"/>
    <property type="match status" value="1"/>
</dbReference>
<dbReference type="Pfam" id="PF00128">
    <property type="entry name" value="Alpha-amylase"/>
    <property type="match status" value="2"/>
</dbReference>
<dbReference type="Pfam" id="PF02806">
    <property type="entry name" value="Alpha-amylase_C"/>
    <property type="match status" value="1"/>
</dbReference>
<dbReference type="Pfam" id="PF02922">
    <property type="entry name" value="CBM_48"/>
    <property type="match status" value="1"/>
</dbReference>
<dbReference type="Pfam" id="PF22019">
    <property type="entry name" value="GlgB_N"/>
    <property type="match status" value="1"/>
</dbReference>
<dbReference type="PIRSF" id="PIRSF000463">
    <property type="entry name" value="GlgB"/>
    <property type="match status" value="1"/>
</dbReference>
<dbReference type="SMART" id="SM00642">
    <property type="entry name" value="Aamy"/>
    <property type="match status" value="1"/>
</dbReference>
<dbReference type="SUPFAM" id="SSF51445">
    <property type="entry name" value="(Trans)glycosidases"/>
    <property type="match status" value="1"/>
</dbReference>
<dbReference type="SUPFAM" id="SSF81296">
    <property type="entry name" value="E set domains"/>
    <property type="match status" value="2"/>
</dbReference>
<dbReference type="SUPFAM" id="SSF51011">
    <property type="entry name" value="Glycosyl hydrolase domain"/>
    <property type="match status" value="1"/>
</dbReference>
<comment type="function">
    <text evidence="1">Catalyzes the formation of the alpha-1,6-glucosidic linkages in glycogen by scission of a 1,4-alpha-linked oligosaccharide from growing alpha-1,4-glucan chains and the subsequent attachment of the oligosaccharide to the alpha-1,6 position.</text>
</comment>
<comment type="catalytic activity">
    <reaction evidence="1">
        <text>Transfers a segment of a (1-&gt;4)-alpha-D-glucan chain to a primary hydroxy group in a similar glucan chain.</text>
        <dbReference type="EC" id="2.4.1.18"/>
    </reaction>
</comment>
<comment type="pathway">
    <text evidence="1">Glycan biosynthesis; glycogen biosynthesis.</text>
</comment>
<comment type="subunit">
    <text evidence="1">Monomer.</text>
</comment>
<comment type="similarity">
    <text evidence="1">Belongs to the glycosyl hydrolase 13 family. GlgB subfamily.</text>
</comment>
<evidence type="ECO:0000255" key="1">
    <source>
        <dbReference type="HAMAP-Rule" id="MF_00685"/>
    </source>
</evidence>
<proteinExistence type="inferred from homology"/>
<reference key="1">
    <citation type="journal article" date="2005" name="Proc. Natl. Acad. Sci. U.S.A.">
        <title>The complete genome sequence of Mycobacterium avium subspecies paratuberculosis.</title>
        <authorList>
            <person name="Li L."/>
            <person name="Bannantine J.P."/>
            <person name="Zhang Q."/>
            <person name="Amonsin A."/>
            <person name="May B.J."/>
            <person name="Alt D."/>
            <person name="Banerji N."/>
            <person name="Kanjilal S."/>
            <person name="Kapur V."/>
        </authorList>
    </citation>
    <scope>NUCLEOTIDE SEQUENCE [LARGE SCALE GENOMIC DNA]</scope>
    <source>
        <strain>ATCC BAA-968 / K-10</strain>
    </source>
</reference>
<feature type="chain" id="PRO_0000188717" description="1,4-alpha-glucan branching enzyme GlgB">
    <location>
        <begin position="1"/>
        <end position="731"/>
    </location>
</feature>
<feature type="active site" description="Nucleophile" evidence="1">
    <location>
        <position position="411"/>
    </location>
</feature>
<feature type="active site" description="Proton donor" evidence="1">
    <location>
        <position position="464"/>
    </location>
</feature>
<organism>
    <name type="scientific">Mycolicibacterium paratuberculosis (strain ATCC BAA-968 / K-10)</name>
    <name type="common">Mycobacterium paratuberculosis</name>
    <dbReference type="NCBI Taxonomy" id="262316"/>
    <lineage>
        <taxon>Bacteria</taxon>
        <taxon>Bacillati</taxon>
        <taxon>Actinomycetota</taxon>
        <taxon>Actinomycetes</taxon>
        <taxon>Mycobacteriales</taxon>
        <taxon>Mycobacteriaceae</taxon>
        <taxon>Mycobacterium</taxon>
        <taxon>Mycobacterium avium complex (MAC)</taxon>
    </lineage>
</organism>
<accession>Q73X75</accession>
<protein>
    <recommendedName>
        <fullName evidence="1">1,4-alpha-glucan branching enzyme GlgB</fullName>
        <ecNumber evidence="1">2.4.1.18</ecNumber>
    </recommendedName>
    <alternativeName>
        <fullName evidence="1">1,4-alpha-D-glucan:1,4-alpha-D-glucan 6-glucosyl-transferase</fullName>
    </alternativeName>
    <alternativeName>
        <fullName evidence="1">Alpha-(1-&gt;4)-glucan branching enzyme</fullName>
    </alternativeName>
    <alternativeName>
        <fullName evidence="1">Glycogen branching enzyme</fullName>
        <shortName evidence="1">BE</shortName>
    </alternativeName>
</protein>